<keyword id="KW-0244">Early protein</keyword>
<keyword id="KW-1035">Host cytoplasm</keyword>
<keyword id="KW-1048">Host nucleus</keyword>
<keyword id="KW-0945">Host-virus interaction</keyword>
<keyword id="KW-1090">Inhibition of host innate immune response by virus</keyword>
<keyword id="KW-0479">Metal-binding</keyword>
<keyword id="KW-1128">Modulation of host ubiquitin pathway by viral E3 ligase</keyword>
<keyword id="KW-1130">Modulation of host ubiquitin pathway by virus</keyword>
<keyword id="KW-1185">Reference proteome</keyword>
<keyword id="KW-0833">Ubl conjugation pathway</keyword>
<keyword id="KW-0899">Viral immunoevasion</keyword>
<keyword id="KW-0862">Zinc</keyword>
<comment type="function">
    <text evidence="4 5 6 7">Plays a major role to prevent cellular inhibition of viral genome replication by nuclear bodies. Assembles an SCF-like E3 ubiquitin ligase complex based on the cellular proteins ELOB, ELOC, CUL5 and RBX1, in cooperation with viral E1B-55K. This viral RING-type ligase ubiquitinates cellular substrates prior to proteasomal degradation: p53/TP53, LIG4, MRE11-RAD50-NBS1 (MRN) complex, ITGA3, DAXX and BLM.</text>
</comment>
<comment type="subunit">
    <text evidence="3 8">Interacts with E1B-55k.</text>
</comment>
<comment type="subcellular location">
    <subcellularLocation>
        <location evidence="1 2">Host nucleus</location>
    </subcellularLocation>
    <subcellularLocation>
        <location evidence="1 2">Host cytoplasm</location>
    </subcellularLocation>
    <text>Colocalizes with host PML-associated nuclear bodies.</text>
</comment>
<comment type="similarity">
    <text evidence="9">Belongs to the adenoviridae E4 30 to 34 kDa protein family.</text>
</comment>
<feature type="chain" id="PRO_0000221776" description="Early 4 ORF6 protein">
    <location>
        <begin position="1"/>
        <end position="294"/>
    </location>
</feature>
<feature type="short sequence motif" description="Nuclear localization signal">
    <location>
        <begin position="239"/>
        <end position="255"/>
    </location>
</feature>
<feature type="mutagenesis site" description="Complete loss of interaction with E1B-55k." evidence="3">
    <original>RRL</original>
    <variation>ARA</variation>
    <location>
        <begin position="243"/>
        <end position="245"/>
    </location>
</feature>
<sequence>MTTSGVPFGMTLRPTRSRLSRRTPYSRDRLPPFETETRATILEDHPLLPECNTLTMHNVSYVRGLPCSVGFTLIQEWVVPWDMVLTREELVILRKCMHVCLCCANIDIMTSMMIHGYESWALHCHCSSPGSLQCIAGGQVLASWFRMVVDGAMFNQRFIWYREVVNYNMPKEVMFMSSVFMRGRHLIYLRLWYDGHVGSVVPAMSFGYSALHCGILNNIVVLCCSYCADLSEIRVRCCARRTRRLMLRAVRIIAEETTAMLYSCRTERRRQQFIRALLQHHRPILMHDYDSTPM</sequence>
<organismHost>
    <name type="scientific">Homo sapiens</name>
    <name type="common">Human</name>
    <dbReference type="NCBI Taxonomy" id="9606"/>
</organismHost>
<protein>
    <recommendedName>
        <fullName>Early 4 ORF6 protein</fullName>
        <shortName>E4-ORF6</shortName>
    </recommendedName>
    <alternativeName>
        <fullName>Early 4 34 kDa protein</fullName>
        <shortName>E4-34k</shortName>
    </alternativeName>
</protein>
<proteinExistence type="evidence at protein level"/>
<reference key="1">
    <citation type="journal article" date="1981" name="Nucleic Acids Res.">
        <title>Nucleotide sequence of adenovirus 2 DNA fragment encoding for the carboxylic region of the fiber protein and the entire E4 region.</title>
        <authorList>
            <person name="Herisse J."/>
            <person name="Rigolet M."/>
            <person name="Dupont de Dinechin S."/>
            <person name="Galibert F."/>
        </authorList>
    </citation>
    <scope>NUCLEOTIDE SEQUENCE [GENOMIC DNA]</scope>
</reference>
<reference key="2">
    <citation type="journal article" date="1984" name="J. Virol.">
        <title>Adenovirus early region 1B 58,000-dalton tumor antigen is physically associated with an early region 4 25,000-dalton protein in productively infected cells.</title>
        <authorList>
            <person name="Sarnow P."/>
            <person name="Hearing P."/>
            <person name="Anderson C.W."/>
            <person name="Halbert D.N."/>
            <person name="Shenk T."/>
            <person name="Levine A.J."/>
        </authorList>
    </citation>
    <scope>INTERACTION WITH E1B-55K</scope>
</reference>
<reference key="3">
    <citation type="journal article" date="1999" name="J. Virol.">
        <title>An arginine-faced amphipathic alpha helix is required for adenovirus type 5 e4orf6 protein function.</title>
        <authorList>
            <person name="Orlando J.S."/>
            <person name="Ornelles D.A."/>
        </authorList>
    </citation>
    <scope>SUBCELLULAR LOCATION</scope>
    <source>
        <strain>Human adenovirus C serotype 5</strain>
    </source>
</reference>
<reference key="4">
    <citation type="journal article" date="1999" name="J. Gen. Virol.">
        <title>The adenovirus type 5 E1b 55K and E4 Orf3 proteins associate in infected cells and affect ND10 components.</title>
        <authorList>
            <person name="Leppard K.N."/>
            <person name="Everett R.D."/>
        </authorList>
    </citation>
    <scope>SUBCELLULAR LOCATION</scope>
    <source>
        <strain>Human adenovirus C serotype 5</strain>
    </source>
</reference>
<reference key="5">
    <citation type="journal article" date="2000" name="J. Biol. Chem.">
        <title>Genetic analysis of a potential zinc-binding domain of the adenovirus E4 34k protein.</title>
        <authorList>
            <person name="Boyer J.L."/>
            <person name="Ketner G."/>
        </authorList>
    </citation>
    <scope>ZINC-BINDING</scope>
</reference>
<reference key="6">
    <citation type="journal article" date="2000" name="J. Virol.">
        <title>A functional complex of adenovirus proteins E1B-55kDa and E4orf6 is necessary to modulate the expression level of p53 but not its transcriptional activity.</title>
        <authorList>
            <person name="Cathomen T."/>
            <person name="Weitzman M.D."/>
        </authorList>
    </citation>
    <scope>INTERACTION WITH E1B-55K</scope>
    <scope>MUTAGENESIS OF 243-ARG--LEU-245</scope>
</reference>
<reference key="7">
    <citation type="journal article" date="2010" name="J. Virol.">
        <title>Proteasome-dependent degradation of Daxx by the viral E1B-55K protein in human adenovirus-infected cells.</title>
        <authorList>
            <person name="Schreiner S."/>
            <person name="Wimmer P."/>
            <person name="Sirma H."/>
            <person name="Everett R.D."/>
            <person name="Blanchette P."/>
            <person name="Groitl P."/>
            <person name="Dobner T."/>
        </authorList>
    </citation>
    <scope>FUNCTION</scope>
    <source>
        <strain>Human adenovirus C serotype 5</strain>
    </source>
</reference>
<reference key="8">
    <citation type="journal article" date="2011" name="J. Virol.">
        <title>The adenovirus E1b55K/E4orf6 complex induces degradation of the Bloom helicase during infection.</title>
        <authorList>
            <person name="Orazio N.I."/>
            <person name="Naeger C.M."/>
            <person name="Karlseder J."/>
            <person name="Weitzman M.D."/>
        </authorList>
    </citation>
    <scope>FUNCTION</scope>
</reference>
<reference key="9">
    <citation type="journal article" date="2005" name="Front. Biosci.">
        <title>Functions of the adenovirus E4 proteins and their impact on viral vectors.</title>
        <authorList>
            <person name="Weitzman M.D."/>
        </authorList>
    </citation>
    <scope>REVIEW</scope>
</reference>
<reference key="10">
    <citation type="journal article" date="2002" name="J. Virol.">
        <title>Analysis of the adenovirus E1B-55K-anchored proteome reveals its link to ubiquitination machinery.</title>
        <authorList>
            <person name="Harada J.N."/>
            <person name="Shevchenko A."/>
            <person name="Shevchenko A."/>
            <person name="Pallas D.C."/>
            <person name="Berk A.J."/>
        </authorList>
    </citation>
    <scope>FUNCTION</scope>
</reference>
<reference key="11">
    <citation type="journal article" date="2003" name="EMBO J.">
        <title>The Mre11 complex is required for ATM activation and the G2/M checkpoint.</title>
        <authorList>
            <person name="Carson C.T."/>
            <person name="Schwartz R.A."/>
            <person name="Stracker T.H."/>
            <person name="Lilley C.E."/>
            <person name="Lee D.V."/>
            <person name="Weitzman M.D."/>
        </authorList>
    </citation>
    <scope>FUNCTION</scope>
</reference>
<accession>P03239</accession>
<name>E434_ADE02</name>
<organism>
    <name type="scientific">Human adenovirus C serotype 2</name>
    <name type="common">HAdV-2</name>
    <name type="synonym">Human adenovirus 2</name>
    <dbReference type="NCBI Taxonomy" id="10515"/>
    <lineage>
        <taxon>Viruses</taxon>
        <taxon>Varidnaviria</taxon>
        <taxon>Bamfordvirae</taxon>
        <taxon>Preplasmiviricota</taxon>
        <taxon>Tectiliviricetes</taxon>
        <taxon>Rowavirales</taxon>
        <taxon>Adenoviridae</taxon>
        <taxon>Mastadenovirus</taxon>
        <taxon>Human mastadenovirus C</taxon>
    </lineage>
</organism>
<evidence type="ECO:0000269" key="1">
    <source>
    </source>
</evidence>
<evidence type="ECO:0000269" key="2">
    <source>
    </source>
</evidence>
<evidence type="ECO:0000269" key="3">
    <source>
    </source>
</evidence>
<evidence type="ECO:0000269" key="4">
    <source>
    </source>
</evidence>
<evidence type="ECO:0000269" key="5">
    <source>
    </source>
</evidence>
<evidence type="ECO:0000269" key="6">
    <source>
    </source>
</evidence>
<evidence type="ECO:0000269" key="7">
    <source>
    </source>
</evidence>
<evidence type="ECO:0000269" key="8">
    <source>
    </source>
</evidence>
<evidence type="ECO:0000305" key="9"/>
<dbReference type="EMBL" id="J01917">
    <property type="status" value="NOT_ANNOTATED_CDS"/>
    <property type="molecule type" value="Genomic_DNA"/>
</dbReference>
<dbReference type="PIR" id="A03805">
    <property type="entry name" value="Q4ADC2"/>
</dbReference>
<dbReference type="RefSeq" id="AP_000192.1">
    <property type="nucleotide sequence ID" value="AC_000007.1"/>
</dbReference>
<dbReference type="Proteomes" id="UP000008167">
    <property type="component" value="Segment"/>
</dbReference>
<dbReference type="GO" id="GO:0030430">
    <property type="term" value="C:host cell cytoplasm"/>
    <property type="evidence" value="ECO:0007669"/>
    <property type="project" value="UniProtKB-SubCell"/>
</dbReference>
<dbReference type="GO" id="GO:0042025">
    <property type="term" value="C:host cell nucleus"/>
    <property type="evidence" value="ECO:0007669"/>
    <property type="project" value="UniProtKB-SubCell"/>
</dbReference>
<dbReference type="GO" id="GO:0046872">
    <property type="term" value="F:metal ion binding"/>
    <property type="evidence" value="ECO:0007669"/>
    <property type="project" value="UniProtKB-KW"/>
</dbReference>
<dbReference type="GO" id="GO:0039648">
    <property type="term" value="P:symbiont-mediated perturbation of host ubiquitin-like protein modification"/>
    <property type="evidence" value="ECO:0007669"/>
    <property type="project" value="UniProtKB-KW"/>
</dbReference>
<dbReference type="GO" id="GO:0052170">
    <property type="term" value="P:symbiont-mediated suppression of host innate immune response"/>
    <property type="evidence" value="ECO:0007669"/>
    <property type="project" value="UniProtKB-KW"/>
</dbReference>
<dbReference type="InterPro" id="IPR007615">
    <property type="entry name" value="Adenovirus_E4_30/34"/>
</dbReference>
<dbReference type="Pfam" id="PF04528">
    <property type="entry name" value="Adeno_E4_34"/>
    <property type="match status" value="1"/>
</dbReference>